<proteinExistence type="evidence at protein level"/>
<dbReference type="EMBL" id="M38250">
    <property type="protein sequence ID" value="AAA28061.1"/>
    <property type="status" value="ALT_SEQ"/>
    <property type="molecule type" value="Genomic_DNA"/>
</dbReference>
<dbReference type="EMBL" id="AY008126">
    <property type="protein sequence ID" value="AAG32079.1"/>
    <property type="molecule type" value="mRNA"/>
</dbReference>
<dbReference type="EMBL" id="BX284605">
    <property type="protein sequence ID" value="CCD68590.2"/>
    <property type="molecule type" value="Genomic_DNA"/>
</dbReference>
<dbReference type="PIR" id="T30140">
    <property type="entry name" value="T30140"/>
</dbReference>
<dbReference type="RefSeq" id="NP_001309498.1">
    <property type="nucleotide sequence ID" value="NM_001322582.3"/>
</dbReference>
<dbReference type="SMR" id="P28052"/>
<dbReference type="BioGRID" id="44357">
    <property type="interactions" value="1"/>
</dbReference>
<dbReference type="FunCoup" id="P28052">
    <property type="interactions" value="62"/>
</dbReference>
<dbReference type="STRING" id="6239.E02C12.5a.1"/>
<dbReference type="PaxDb" id="6239-E02C12.5"/>
<dbReference type="PeptideAtlas" id="P28052"/>
<dbReference type="EnsemblMetazoa" id="E02C12.5a.1">
    <property type="protein sequence ID" value="E02C12.5a.1"/>
    <property type="gene ID" value="WBGene00001665"/>
</dbReference>
<dbReference type="GeneID" id="179319"/>
<dbReference type="KEGG" id="cel:CELE_E02C12.5"/>
<dbReference type="UCSC" id="E02C12.5">
    <property type="organism name" value="c. elegans"/>
</dbReference>
<dbReference type="AGR" id="WB:WBGene00001665"/>
<dbReference type="CTD" id="179319"/>
<dbReference type="WormBase" id="E02C12.5a">
    <property type="protein sequence ID" value="CE51492"/>
    <property type="gene ID" value="WBGene00001665"/>
    <property type="gene designation" value="gpa-3"/>
</dbReference>
<dbReference type="eggNOG" id="KOG0082">
    <property type="taxonomic scope" value="Eukaryota"/>
</dbReference>
<dbReference type="GeneTree" id="ENSGT00970000196172"/>
<dbReference type="HOGENOM" id="CLU_014184_6_0_1"/>
<dbReference type="InParanoid" id="P28052"/>
<dbReference type="OMA" id="QVQMILD"/>
<dbReference type="OrthoDB" id="5817230at2759"/>
<dbReference type="PhylomeDB" id="P28052"/>
<dbReference type="PRO" id="PR:P28052"/>
<dbReference type="Proteomes" id="UP000001940">
    <property type="component" value="Chromosome V"/>
</dbReference>
<dbReference type="GO" id="GO:0030424">
    <property type="term" value="C:axon"/>
    <property type="evidence" value="ECO:0000314"/>
    <property type="project" value="WormBase"/>
</dbReference>
<dbReference type="GO" id="GO:0005737">
    <property type="term" value="C:cytoplasm"/>
    <property type="evidence" value="ECO:0000318"/>
    <property type="project" value="GO_Central"/>
</dbReference>
<dbReference type="GO" id="GO:0005834">
    <property type="term" value="C:heterotrimeric G-protein complex"/>
    <property type="evidence" value="ECO:0000318"/>
    <property type="project" value="GO_Central"/>
</dbReference>
<dbReference type="GO" id="GO:0043025">
    <property type="term" value="C:neuronal cell body"/>
    <property type="evidence" value="ECO:0000314"/>
    <property type="project" value="WormBase"/>
</dbReference>
<dbReference type="GO" id="GO:0097730">
    <property type="term" value="C:non-motile cilium"/>
    <property type="evidence" value="ECO:0000314"/>
    <property type="project" value="WormBase"/>
</dbReference>
<dbReference type="GO" id="GO:0001664">
    <property type="term" value="F:G protein-coupled receptor binding"/>
    <property type="evidence" value="ECO:0000318"/>
    <property type="project" value="GO_Central"/>
</dbReference>
<dbReference type="GO" id="GO:0031683">
    <property type="term" value="F:G-protein beta/gamma-subunit complex binding"/>
    <property type="evidence" value="ECO:0000318"/>
    <property type="project" value="GO_Central"/>
</dbReference>
<dbReference type="GO" id="GO:0005525">
    <property type="term" value="F:GTP binding"/>
    <property type="evidence" value="ECO:0007669"/>
    <property type="project" value="UniProtKB-KW"/>
</dbReference>
<dbReference type="GO" id="GO:0003924">
    <property type="term" value="F:GTPase activity"/>
    <property type="evidence" value="ECO:0000318"/>
    <property type="project" value="GO_Central"/>
</dbReference>
<dbReference type="GO" id="GO:0046872">
    <property type="term" value="F:metal ion binding"/>
    <property type="evidence" value="ECO:0007669"/>
    <property type="project" value="UniProtKB-KW"/>
</dbReference>
<dbReference type="GO" id="GO:0031849">
    <property type="term" value="F:olfactory receptor binding"/>
    <property type="evidence" value="ECO:0000353"/>
    <property type="project" value="WormBase"/>
</dbReference>
<dbReference type="GO" id="GO:0007188">
    <property type="term" value="P:adenylate cyclase-modulating G protein-coupled receptor signaling pathway"/>
    <property type="evidence" value="ECO:0000318"/>
    <property type="project" value="GO_Central"/>
</dbReference>
<dbReference type="GO" id="GO:0071321">
    <property type="term" value="P:cellular response to cGMP"/>
    <property type="evidence" value="ECO:0000315"/>
    <property type="project" value="UniProtKB"/>
</dbReference>
<dbReference type="GO" id="GO:0040024">
    <property type="term" value="P:dauer larval development"/>
    <property type="evidence" value="ECO:0000315"/>
    <property type="project" value="WormBase"/>
</dbReference>
<dbReference type="GO" id="GO:0050829">
    <property type="term" value="P:defense response to Gram-negative bacterium"/>
    <property type="evidence" value="ECO:0000316"/>
    <property type="project" value="UniProtKB"/>
</dbReference>
<dbReference type="GO" id="GO:0008340">
    <property type="term" value="P:determination of adult lifespan"/>
    <property type="evidence" value="ECO:0000315"/>
    <property type="project" value="UniProtKB"/>
</dbReference>
<dbReference type="GO" id="GO:0007186">
    <property type="term" value="P:G protein-coupled receptor signaling pathway"/>
    <property type="evidence" value="ECO:0000315"/>
    <property type="project" value="WormBase"/>
</dbReference>
<dbReference type="GO" id="GO:0010629">
    <property type="term" value="P:negative regulation of gene expression"/>
    <property type="evidence" value="ECO:0000315"/>
    <property type="project" value="UniProtKB"/>
</dbReference>
<dbReference type="GO" id="GO:0007602">
    <property type="term" value="P:phototransduction"/>
    <property type="evidence" value="ECO:0000316"/>
    <property type="project" value="UniProtKB"/>
</dbReference>
<dbReference type="GO" id="GO:0010628">
    <property type="term" value="P:positive regulation of gene expression"/>
    <property type="evidence" value="ECO:0000315"/>
    <property type="project" value="UniProtKB"/>
</dbReference>
<dbReference type="GO" id="GO:0050913">
    <property type="term" value="P:sensory perception of bitter taste"/>
    <property type="evidence" value="ECO:0000315"/>
    <property type="project" value="WormBase"/>
</dbReference>
<dbReference type="CDD" id="cd00066">
    <property type="entry name" value="G-alpha"/>
    <property type="match status" value="1"/>
</dbReference>
<dbReference type="FunFam" id="1.10.400.10:FF:000011">
    <property type="entry name" value="Guanine nucleotide-binding protein alpha-1 subunit"/>
    <property type="match status" value="1"/>
</dbReference>
<dbReference type="FunFam" id="3.40.50.300:FF:000041">
    <property type="entry name" value="Guanine nucleotide-binding protein G(I) subunit alpha"/>
    <property type="match status" value="1"/>
</dbReference>
<dbReference type="FunFam" id="3.40.50.300:FF:000692">
    <property type="entry name" value="Guanine nucleotide-binding protein subunit alpha"/>
    <property type="match status" value="1"/>
</dbReference>
<dbReference type="Gene3D" id="1.10.400.10">
    <property type="entry name" value="GI Alpha 1, domain 2-like"/>
    <property type="match status" value="1"/>
</dbReference>
<dbReference type="Gene3D" id="3.40.50.300">
    <property type="entry name" value="P-loop containing nucleotide triphosphate hydrolases"/>
    <property type="match status" value="1"/>
</dbReference>
<dbReference type="InterPro" id="IPR001408">
    <property type="entry name" value="Gprotein_alpha_I"/>
</dbReference>
<dbReference type="InterPro" id="IPR001019">
    <property type="entry name" value="Gprotein_alpha_su"/>
</dbReference>
<dbReference type="InterPro" id="IPR011025">
    <property type="entry name" value="GproteinA_insert"/>
</dbReference>
<dbReference type="InterPro" id="IPR027417">
    <property type="entry name" value="P-loop_NTPase"/>
</dbReference>
<dbReference type="PANTHER" id="PTHR10218">
    <property type="entry name" value="GTP-BINDING PROTEIN ALPHA SUBUNIT"/>
    <property type="match status" value="1"/>
</dbReference>
<dbReference type="PANTHER" id="PTHR10218:SF245">
    <property type="entry name" value="GUANINE NUCLEOTIDE-BINDING PROTEIN ALPHA-2 SUBUNIT-RELATED"/>
    <property type="match status" value="1"/>
</dbReference>
<dbReference type="Pfam" id="PF00503">
    <property type="entry name" value="G-alpha"/>
    <property type="match status" value="1"/>
</dbReference>
<dbReference type="PRINTS" id="PR00318">
    <property type="entry name" value="GPROTEINA"/>
</dbReference>
<dbReference type="PRINTS" id="PR00441">
    <property type="entry name" value="GPROTEINAI"/>
</dbReference>
<dbReference type="SMART" id="SM00275">
    <property type="entry name" value="G_alpha"/>
    <property type="match status" value="1"/>
</dbReference>
<dbReference type="SUPFAM" id="SSF52540">
    <property type="entry name" value="P-loop containing nucleoside triphosphate hydrolases"/>
    <property type="match status" value="1"/>
</dbReference>
<dbReference type="SUPFAM" id="SSF47895">
    <property type="entry name" value="Transducin (alpha subunit), insertion domain"/>
    <property type="match status" value="1"/>
</dbReference>
<dbReference type="PROSITE" id="PS51882">
    <property type="entry name" value="G_ALPHA"/>
    <property type="match status" value="1"/>
</dbReference>
<reference key="1">
    <citation type="journal article" date="1991" name="Cell Regul.">
        <title>Homologous and unique G protein alpha subunits in the nematode Caenorhabditis elegans.</title>
        <authorList>
            <person name="Lochrie M.A."/>
            <person name="Mendel J.E."/>
            <person name="Sternberg P.W."/>
            <person name="Simon M.I."/>
        </authorList>
    </citation>
    <scope>NUCLEOTIDE SEQUENCE [GENOMIC DNA]</scope>
    <source>
        <strain>Bristol N2</strain>
    </source>
</reference>
<reference key="2">
    <citation type="submission" date="2000-09" db="EMBL/GenBank/DDBJ databases">
        <title>Interaction analysis of the complete G-alpha subfamily of heterotrimeric G proteins from Caenorhabditis elegans.</title>
        <authorList>
            <person name="Cuppen E."/>
            <person name="Jansen G."/>
            <person name="Plasterk R.H.A."/>
        </authorList>
    </citation>
    <scope>NUCLEOTIDE SEQUENCE [MRNA]</scope>
    <source>
        <strain>Bristol N2</strain>
    </source>
</reference>
<reference key="3">
    <citation type="journal article" date="1998" name="Science">
        <title>Genome sequence of the nematode C. elegans: a platform for investigating biology.</title>
        <authorList>
            <consortium name="The C. elegans sequencing consortium"/>
        </authorList>
    </citation>
    <scope>NUCLEOTIDE SEQUENCE [LARGE SCALE GENOMIC DNA]</scope>
    <source>
        <strain>Bristol N2</strain>
    </source>
</reference>
<reference key="4">
    <citation type="journal article" date="1999" name="Nat. Genet.">
        <title>The complete family of genes encoding G proteins of Caenorhabditis elegans.</title>
        <authorList>
            <person name="Jansen G."/>
            <person name="Thijssen K.L."/>
            <person name="Werner P."/>
            <person name="van der Horst M."/>
            <person name="Hazendonk E."/>
            <person name="Plasterk R.H.A."/>
        </authorList>
    </citation>
    <scope>GENE FAMILY</scope>
    <scope>NOMENCLATURE</scope>
</reference>
<reference key="5">
    <citation type="journal article" date="2004" name="EMBO J.">
        <title>Worms taste bitter: ASH neurons, QUI-1, GPA-3 and ODR-3 mediate quinine avoidance in Caenorhabditis elegans.</title>
        <authorList>
            <person name="Hilliard M.A."/>
            <person name="Bergamasco C."/>
            <person name="Arbucci S."/>
            <person name="Plasterk R.H."/>
            <person name="Bazzicalupo P."/>
        </authorList>
    </citation>
    <scope>FUNCTION</scope>
</reference>
<reference key="6">
    <citation type="journal article" date="2009" name="Aging Cell">
        <title>Endogenous cGMP regulates adult longevity via the insulin signaling pathway in Caenorhabditis elegans.</title>
        <authorList>
            <person name="Hahm J.H."/>
            <person name="Kim S."/>
            <person name="Paik Y.K."/>
        </authorList>
    </citation>
    <scope>FUNCTION</scope>
    <scope>MUTAGENESIS OF GLN-205</scope>
</reference>
<reference key="7">
    <citation type="journal article" date="2014" name="Cell">
        <title>Chemosensation of bacterial secondary metabolites modulates neuroendocrine signaling and behavior of C. elegans.</title>
        <authorList>
            <person name="Meisel J.D."/>
            <person name="Panda O."/>
            <person name="Mahanti P."/>
            <person name="Schroeder F.C."/>
            <person name="Kim D.H."/>
        </authorList>
    </citation>
    <scope>FUNCTION</scope>
    <scope>MUTAGENESIS OF GLY-40</scope>
</reference>
<organism>
    <name type="scientific">Caenorhabditis elegans</name>
    <dbReference type="NCBI Taxonomy" id="6239"/>
    <lineage>
        <taxon>Eukaryota</taxon>
        <taxon>Metazoa</taxon>
        <taxon>Ecdysozoa</taxon>
        <taxon>Nematoda</taxon>
        <taxon>Chromadorea</taxon>
        <taxon>Rhabditida</taxon>
        <taxon>Rhabditina</taxon>
        <taxon>Rhabditomorpha</taxon>
        <taxon>Rhabditoidea</taxon>
        <taxon>Rhabditidae</taxon>
        <taxon>Peloderinae</taxon>
        <taxon>Caenorhabditis</taxon>
    </lineage>
</organism>
<sequence>MGLCQSAEDKELTLKSKAIDKEMMQNHMSQQKVVKLLLLGAGECGKSTVLKQMRILHDHGFTAEEAEQQKSVVFNNTLQAMTAILKGMEALRMTFDKPIRENDAKFVMESHKMLQEAKVFPEELANAIQALWNDKAVQQVIAKGNEFQMPESAPHFLSSLDRIKLPDYNPTEQDILLSRIKTTGIVEVKFQMKSVDFRVFDVGGQRSERKKWIHCFEDVNAIIFIAAISEYDQVLFEDETTNRMIESMRLFESICNSRWFINTSMILFLNKKDLFAEKIKRTSIKSAFPDYKGAQTYDESCRYIEEKFDGLNANPEKTIYMHQTCATDTDQVQMILDSVIDMIIQANLQGCGL</sequence>
<protein>
    <recommendedName>
        <fullName>Guanine nucleotide-binding protein alpha-3 subunit</fullName>
    </recommendedName>
</protein>
<accession>P28052</accession>
<accession>Q19029</accession>
<comment type="function">
    <text evidence="4 5 6">Guanine nucleotide-binding proteins (G proteins) are involved as modulators or transducers in various transmembrane signaling systems. Promotes transcription of 3',5'-cyclic phosphodiesterases pde-1 and pde-5, leading to reduced cGMP levels in sensory neurons. This causes suppression of insulin production and signaling which leads to increased daf-16 activity and contributes to increased adult lifespan and resistance to oxidative stress. In addition, by reducing cGMP levels, inhibits TGF-beta signaling pathways (PubMed:19489741). Involved in behavioral response to P.aeruginosa by controlling the expression of daf-7, a member of the TGF-beta family, in ASJ sensory neurons (PubMed:25303524). Plays a role in the avoidance response to the noxious chemical quinine in ASH sensory neurons (PubMed:14988722).</text>
</comment>
<comment type="subunit">
    <text>G proteins are composed of 3 units; alpha, beta and gamma. The alpha chain contains the guanine nucleotide binding site.</text>
</comment>
<comment type="similarity">
    <text evidence="7">Belongs to the G-alpha family. G(q) subfamily.</text>
</comment>
<comment type="sequence caution" evidence="7">
    <conflict type="erroneous termination">
        <sequence resource="EMBL-CDS" id="AAA28061"/>
    </conflict>
    <text>Extended C-terminus.</text>
</comment>
<keyword id="KW-0342">GTP-binding</keyword>
<keyword id="KW-0449">Lipoprotein</keyword>
<keyword id="KW-0460">Magnesium</keyword>
<keyword id="KW-0479">Metal-binding</keyword>
<keyword id="KW-0519">Myristate</keyword>
<keyword id="KW-0547">Nucleotide-binding</keyword>
<keyword id="KW-0564">Palmitate</keyword>
<keyword id="KW-1185">Reference proteome</keyword>
<keyword id="KW-0807">Transducer</keyword>
<evidence type="ECO:0000250" key="1"/>
<evidence type="ECO:0000255" key="2"/>
<evidence type="ECO:0000255" key="3">
    <source>
        <dbReference type="PROSITE-ProRule" id="PRU01230"/>
    </source>
</evidence>
<evidence type="ECO:0000269" key="4">
    <source>
    </source>
</evidence>
<evidence type="ECO:0000269" key="5">
    <source>
    </source>
</evidence>
<evidence type="ECO:0000269" key="6">
    <source>
    </source>
</evidence>
<evidence type="ECO:0000305" key="7"/>
<evidence type="ECO:0000312" key="8">
    <source>
        <dbReference type="WormBase" id="E02C12.5a"/>
    </source>
</evidence>
<gene>
    <name evidence="8" type="primary">gpa-3</name>
    <name evidence="8" type="ORF">E02C12.5</name>
</gene>
<feature type="initiator methionine" description="Removed" evidence="2">
    <location>
        <position position="1"/>
    </location>
</feature>
<feature type="chain" id="PRO_0000203633" description="Guanine nucleotide-binding protein alpha-3 subunit">
    <location>
        <begin position="2"/>
        <end position="353"/>
    </location>
</feature>
<feature type="domain" description="G-alpha" evidence="3">
    <location>
        <begin position="32"/>
        <end position="353"/>
    </location>
</feature>
<feature type="region of interest" description="G1 motif" evidence="3">
    <location>
        <begin position="35"/>
        <end position="48"/>
    </location>
</feature>
<feature type="region of interest" description="G2 motif" evidence="3">
    <location>
        <begin position="174"/>
        <end position="182"/>
    </location>
</feature>
<feature type="region of interest" description="G3 motif" evidence="3">
    <location>
        <begin position="197"/>
        <end position="206"/>
    </location>
</feature>
<feature type="region of interest" description="G4 motif" evidence="3">
    <location>
        <begin position="266"/>
        <end position="273"/>
    </location>
</feature>
<feature type="region of interest" description="G5 motif" evidence="3">
    <location>
        <begin position="324"/>
        <end position="329"/>
    </location>
</feature>
<feature type="binding site" evidence="1">
    <location>
        <begin position="40"/>
        <end position="47"/>
    </location>
    <ligand>
        <name>GTP</name>
        <dbReference type="ChEBI" id="CHEBI:37565"/>
    </ligand>
</feature>
<feature type="binding site" evidence="1">
    <location>
        <position position="47"/>
    </location>
    <ligand>
        <name>Mg(2+)</name>
        <dbReference type="ChEBI" id="CHEBI:18420"/>
    </ligand>
</feature>
<feature type="binding site" evidence="1">
    <location>
        <begin position="176"/>
        <end position="182"/>
    </location>
    <ligand>
        <name>GTP</name>
        <dbReference type="ChEBI" id="CHEBI:37565"/>
    </ligand>
</feature>
<feature type="binding site" evidence="1">
    <location>
        <position position="182"/>
    </location>
    <ligand>
        <name>Mg(2+)</name>
        <dbReference type="ChEBI" id="CHEBI:18420"/>
    </ligand>
</feature>
<feature type="binding site" evidence="1">
    <location>
        <begin position="201"/>
        <end position="205"/>
    </location>
    <ligand>
        <name>GTP</name>
        <dbReference type="ChEBI" id="CHEBI:37565"/>
    </ligand>
</feature>
<feature type="binding site" evidence="1">
    <location>
        <begin position="270"/>
        <end position="273"/>
    </location>
    <ligand>
        <name>GTP</name>
        <dbReference type="ChEBI" id="CHEBI:37565"/>
    </ligand>
</feature>
<feature type="binding site" evidence="1">
    <location>
        <position position="326"/>
    </location>
    <ligand>
        <name>GTP</name>
        <dbReference type="ChEBI" id="CHEBI:37565"/>
    </ligand>
</feature>
<feature type="lipid moiety-binding region" description="N-myristoyl glycine" evidence="2">
    <location>
        <position position="2"/>
    </location>
</feature>
<feature type="lipid moiety-binding region" description="S-palmitoyl cysteine" evidence="2">
    <location>
        <position position="4"/>
    </location>
</feature>
<feature type="mutagenesis site" description="Reduced daf-7 expression in ASJ neurons." evidence="6">
    <original>G</original>
    <variation>D</variation>
    <location>
        <position position="40"/>
    </location>
</feature>
<feature type="mutagenesis site" description="In syls25; constitutively active. In adults, premature death resulting from internal egg hatching. Increased lifespan and resistance to oxidative stress when progeny overgrowth is prevented. Reduction in pde-1, pde-5, daf-7, ins-7 and daf-28 mRNA levels." evidence="5">
    <original>Q</original>
    <variation>L</variation>
    <location>
        <position position="205"/>
    </location>
</feature>
<feature type="sequence conflict" description="In Ref. 1; AAA28061." evidence="7" ref="1">
    <original>F</original>
    <variation>L</variation>
    <location>
        <position position="200"/>
    </location>
</feature>
<feature type="sequence conflict" description="In Ref. 1; AAA28061." evidence="7" ref="1">
    <original>L</original>
    <variation>LY</variation>
    <location>
        <position position="353"/>
    </location>
</feature>
<name>GPA3_CAEEL</name>